<reference key="1">
    <citation type="journal article" date="2008" name="Proc. Natl. Acad. Sci. U.S.A.">
        <title>The genome of Cyanothece 51142, a unicellular diazotrophic cyanobacterium important in the marine nitrogen cycle.</title>
        <authorList>
            <person name="Welsh E.A."/>
            <person name="Liberton M."/>
            <person name="Stoeckel J."/>
            <person name="Loh T."/>
            <person name="Elvitigala T."/>
            <person name="Wang C."/>
            <person name="Wollam A."/>
            <person name="Fulton R.S."/>
            <person name="Clifton S.W."/>
            <person name="Jacobs J.M."/>
            <person name="Aurora R."/>
            <person name="Ghosh B.K."/>
            <person name="Sherman L.A."/>
            <person name="Smith R.D."/>
            <person name="Wilson R.K."/>
            <person name="Pakrasi H.B."/>
        </authorList>
    </citation>
    <scope>NUCLEOTIDE SEQUENCE [LARGE SCALE GENOMIC DNA]</scope>
    <source>
        <strain>ATCC 51142 / BH68</strain>
    </source>
</reference>
<sequence>MAGHSKWANIKRQKERVDAKKGKTFAQLSRAIIVAAKHGIPDPAGNFQLRTAIEKAKAAGIPNDNIERAIAKGAGTYENDDTVYEEIRYEGYGVGGVAILIEAFTDNRNRTAADLRSAFNKNGGNLGETGCVSWMFEQKGVVRIEGNIDENALLEASMEGEADSYELYEEDDDQAAEVFTEMTNLDTLSQTLNDKNFNVTEVELRWIPNNLIYIENDEQAKSIIKLIEALESLDDVQNVTTNFEMADELMLLTVES</sequence>
<proteinExistence type="inferred from homology"/>
<protein>
    <recommendedName>
        <fullName evidence="1">Probable transcriptional regulatory protein cce_0894</fullName>
    </recommendedName>
</protein>
<comment type="subcellular location">
    <subcellularLocation>
        <location evidence="1">Cytoplasm</location>
    </subcellularLocation>
</comment>
<comment type="similarity">
    <text evidence="1">Belongs to the TACO1 family.</text>
</comment>
<feature type="chain" id="PRO_1000200091" description="Probable transcriptional regulatory protein cce_0894">
    <location>
        <begin position="1"/>
        <end position="256"/>
    </location>
</feature>
<evidence type="ECO:0000255" key="1">
    <source>
        <dbReference type="HAMAP-Rule" id="MF_00693"/>
    </source>
</evidence>
<accession>B1WS51</accession>
<gene>
    <name type="ordered locus">cce_0894</name>
</gene>
<organism>
    <name type="scientific">Crocosphaera subtropica (strain ATCC 51142 / BH68)</name>
    <name type="common">Cyanothece sp. (strain ATCC 51142)</name>
    <dbReference type="NCBI Taxonomy" id="43989"/>
    <lineage>
        <taxon>Bacteria</taxon>
        <taxon>Bacillati</taxon>
        <taxon>Cyanobacteriota</taxon>
        <taxon>Cyanophyceae</taxon>
        <taxon>Oscillatoriophycideae</taxon>
        <taxon>Chroococcales</taxon>
        <taxon>Aphanothecaceae</taxon>
        <taxon>Crocosphaera</taxon>
        <taxon>Crocosphaera subtropica</taxon>
    </lineage>
</organism>
<dbReference type="EMBL" id="CP000806">
    <property type="protein sequence ID" value="ACB50245.1"/>
    <property type="molecule type" value="Genomic_DNA"/>
</dbReference>
<dbReference type="RefSeq" id="WP_009546128.1">
    <property type="nucleotide sequence ID" value="NC_010546.1"/>
</dbReference>
<dbReference type="SMR" id="B1WS51"/>
<dbReference type="STRING" id="43989.cce_0894"/>
<dbReference type="KEGG" id="cyt:cce_0894"/>
<dbReference type="eggNOG" id="COG0217">
    <property type="taxonomic scope" value="Bacteria"/>
</dbReference>
<dbReference type="HOGENOM" id="CLU_062974_1_0_3"/>
<dbReference type="OrthoDB" id="9781053at2"/>
<dbReference type="Proteomes" id="UP000001203">
    <property type="component" value="Chromosome circular"/>
</dbReference>
<dbReference type="GO" id="GO:0005829">
    <property type="term" value="C:cytosol"/>
    <property type="evidence" value="ECO:0007669"/>
    <property type="project" value="TreeGrafter"/>
</dbReference>
<dbReference type="GO" id="GO:0003677">
    <property type="term" value="F:DNA binding"/>
    <property type="evidence" value="ECO:0007669"/>
    <property type="project" value="UniProtKB-UniRule"/>
</dbReference>
<dbReference type="GO" id="GO:0006355">
    <property type="term" value="P:regulation of DNA-templated transcription"/>
    <property type="evidence" value="ECO:0007669"/>
    <property type="project" value="UniProtKB-UniRule"/>
</dbReference>
<dbReference type="FunFam" id="1.10.10.200:FF:000002">
    <property type="entry name" value="Probable transcriptional regulatory protein CLM62_37755"/>
    <property type="match status" value="1"/>
</dbReference>
<dbReference type="Gene3D" id="1.10.10.200">
    <property type="match status" value="1"/>
</dbReference>
<dbReference type="Gene3D" id="3.30.70.980">
    <property type="match status" value="2"/>
</dbReference>
<dbReference type="HAMAP" id="MF_00693">
    <property type="entry name" value="Transcrip_reg_TACO1"/>
    <property type="match status" value="1"/>
</dbReference>
<dbReference type="InterPro" id="IPR017856">
    <property type="entry name" value="Integrase-like_N"/>
</dbReference>
<dbReference type="InterPro" id="IPR048300">
    <property type="entry name" value="TACO1_YebC-like_2nd/3rd_dom"/>
</dbReference>
<dbReference type="InterPro" id="IPR049083">
    <property type="entry name" value="TACO1_YebC_N"/>
</dbReference>
<dbReference type="InterPro" id="IPR002876">
    <property type="entry name" value="Transcrip_reg_TACO1-like"/>
</dbReference>
<dbReference type="InterPro" id="IPR026564">
    <property type="entry name" value="Transcrip_reg_TACO1-like_dom3"/>
</dbReference>
<dbReference type="InterPro" id="IPR029072">
    <property type="entry name" value="YebC-like"/>
</dbReference>
<dbReference type="NCBIfam" id="NF001030">
    <property type="entry name" value="PRK00110.1"/>
    <property type="match status" value="1"/>
</dbReference>
<dbReference type="NCBIfam" id="NF009044">
    <property type="entry name" value="PRK12378.1"/>
    <property type="match status" value="1"/>
</dbReference>
<dbReference type="NCBIfam" id="TIGR01033">
    <property type="entry name" value="YebC/PmpR family DNA-binding transcriptional regulator"/>
    <property type="match status" value="1"/>
</dbReference>
<dbReference type="PANTHER" id="PTHR12532:SF6">
    <property type="entry name" value="TRANSCRIPTIONAL REGULATORY PROTEIN YEBC-RELATED"/>
    <property type="match status" value="1"/>
</dbReference>
<dbReference type="PANTHER" id="PTHR12532">
    <property type="entry name" value="TRANSLATIONAL ACTIVATOR OF CYTOCHROME C OXIDASE 1"/>
    <property type="match status" value="1"/>
</dbReference>
<dbReference type="Pfam" id="PF20772">
    <property type="entry name" value="TACO1_YebC_N"/>
    <property type="match status" value="1"/>
</dbReference>
<dbReference type="Pfam" id="PF01709">
    <property type="entry name" value="Transcrip_reg"/>
    <property type="match status" value="1"/>
</dbReference>
<dbReference type="SUPFAM" id="SSF75625">
    <property type="entry name" value="YebC-like"/>
    <property type="match status" value="1"/>
</dbReference>
<keyword id="KW-0963">Cytoplasm</keyword>
<keyword id="KW-0238">DNA-binding</keyword>
<keyword id="KW-1185">Reference proteome</keyword>
<keyword id="KW-0804">Transcription</keyword>
<keyword id="KW-0805">Transcription regulation</keyword>
<name>Y894_CROS5</name>